<protein>
    <recommendedName>
        <fullName evidence="1">A-type ATP synthase subunit A</fullName>
        <ecNumber evidence="1">7.1.2.2</ecNumber>
    </recommendedName>
</protein>
<accession>B0R755</accession>
<name>AATA_HALS3</name>
<feature type="chain" id="PRO_1000115640" description="A-type ATP synthase subunit A">
    <location>
        <begin position="1"/>
        <end position="585"/>
    </location>
</feature>
<feature type="binding site" evidence="1">
    <location>
        <begin position="235"/>
        <end position="242"/>
    </location>
    <ligand>
        <name>ATP</name>
        <dbReference type="ChEBI" id="CHEBI:30616"/>
    </ligand>
</feature>
<comment type="function">
    <text evidence="1">Component of the A-type ATP synthase that produces ATP from ADP in the presence of a proton gradient across the membrane. The A chain is the catalytic subunit.</text>
</comment>
<comment type="catalytic activity">
    <reaction evidence="1">
        <text>ATP + H2O + 4 H(+)(in) = ADP + phosphate + 5 H(+)(out)</text>
        <dbReference type="Rhea" id="RHEA:57720"/>
        <dbReference type="ChEBI" id="CHEBI:15377"/>
        <dbReference type="ChEBI" id="CHEBI:15378"/>
        <dbReference type="ChEBI" id="CHEBI:30616"/>
        <dbReference type="ChEBI" id="CHEBI:43474"/>
        <dbReference type="ChEBI" id="CHEBI:456216"/>
        <dbReference type="EC" id="7.1.2.2"/>
    </reaction>
</comment>
<comment type="subunit">
    <text evidence="1">Has multiple subunits with at least A(3), B(3), C, D, E, F, H, I and proteolipid K(x).</text>
</comment>
<comment type="subcellular location">
    <subcellularLocation>
        <location evidence="1">Cell membrane</location>
        <topology evidence="1">Peripheral membrane protein</topology>
    </subcellularLocation>
</comment>
<comment type="similarity">
    <text evidence="1">Belongs to the ATPase alpha/beta chains family.</text>
</comment>
<keyword id="KW-0066">ATP synthesis</keyword>
<keyword id="KW-0067">ATP-binding</keyword>
<keyword id="KW-1003">Cell membrane</keyword>
<keyword id="KW-0375">Hydrogen ion transport</keyword>
<keyword id="KW-0406">Ion transport</keyword>
<keyword id="KW-0472">Membrane</keyword>
<keyword id="KW-0547">Nucleotide-binding</keyword>
<keyword id="KW-1278">Translocase</keyword>
<keyword id="KW-0813">Transport</keyword>
<evidence type="ECO:0000255" key="1">
    <source>
        <dbReference type="HAMAP-Rule" id="MF_00309"/>
    </source>
</evidence>
<organism>
    <name type="scientific">Halobacterium salinarum (strain ATCC 29341 / DSM 671 / R1)</name>
    <dbReference type="NCBI Taxonomy" id="478009"/>
    <lineage>
        <taxon>Archaea</taxon>
        <taxon>Methanobacteriati</taxon>
        <taxon>Methanobacteriota</taxon>
        <taxon>Stenosarchaea group</taxon>
        <taxon>Halobacteria</taxon>
        <taxon>Halobacteriales</taxon>
        <taxon>Halobacteriaceae</taxon>
        <taxon>Halobacterium</taxon>
        <taxon>Halobacterium salinarum NRC-34001</taxon>
    </lineage>
</organism>
<reference key="1">
    <citation type="journal article" date="2008" name="Genomics">
        <title>Evolution in the laboratory: the genome of Halobacterium salinarum strain R1 compared to that of strain NRC-1.</title>
        <authorList>
            <person name="Pfeiffer F."/>
            <person name="Schuster S.C."/>
            <person name="Broicher A."/>
            <person name="Falb M."/>
            <person name="Palm P."/>
            <person name="Rodewald K."/>
            <person name="Ruepp A."/>
            <person name="Soppa J."/>
            <person name="Tittor J."/>
            <person name="Oesterhelt D."/>
        </authorList>
    </citation>
    <scope>NUCLEOTIDE SEQUENCE [LARGE SCALE GENOMIC DNA]</scope>
    <source>
        <strain>ATCC 29341 / DSM 671 / R1</strain>
    </source>
</reference>
<sequence>MSQAEAITDTGEIESVSGPVVTATGLDAQMNDVVYVGDEGLMGEVIEIEGDVTTIQVYEETSGIGPGQPVDNTGEPLTVDLGPGMLDSIYDGVQRPLDVLEDEMGAFLDRGVDAPGIDLDTDWEFEPTVEAGDEVAAGDVVGTVDETVSIEHKVLVPPRSDGGEVVAVESGTFTVDDTVVELDTGEEIQMHQEWPVRRQRPTVDKQTPTEPLVSGQRILDGLFPIAKGGTAAIPGPFGSGKTVTQQSLAKFADADIVVYIGCGERGNEMTEVIEDFPELPDPQTGNPLMARTTLIANTSNMPVAARESCIYTGITIAEYYRDMGYDVALMADSTSRWAEAMREISSRLEEMPGEEGYPAYLAARLSEFYERAGYFENFNGTEGSISVIGAVSPPGGDFSEPVTQNTLRIVKTFWALDSDLAERRHFPAINWDESYSLYKDQLDPWFTDNVVDDWAEQRQWAVDILDEESELEEIVQLVGKDALPEDQQLTLEVARYIREAWLQQNALHDVDRYCPPEKTYAILSGIKTLHEESFEALDAGVPVEEITSIDAAPRLNRLGTTPDDEHEAEVAEIKQQITEQLRELY</sequence>
<dbReference type="EC" id="7.1.2.2" evidence="1"/>
<dbReference type="EMBL" id="AM774415">
    <property type="protein sequence ID" value="CAP14574.1"/>
    <property type="molecule type" value="Genomic_DNA"/>
</dbReference>
<dbReference type="RefSeq" id="WP_010903579.1">
    <property type="nucleotide sequence ID" value="NC_010364.1"/>
</dbReference>
<dbReference type="SMR" id="B0R755"/>
<dbReference type="EnsemblBacteria" id="CAP14574">
    <property type="protein sequence ID" value="CAP14574"/>
    <property type="gene ID" value="OE_3985R"/>
</dbReference>
<dbReference type="KEGG" id="hsl:OE_3985R"/>
<dbReference type="HOGENOM" id="CLU_008162_3_1_2"/>
<dbReference type="PhylomeDB" id="B0R755"/>
<dbReference type="Proteomes" id="UP000001321">
    <property type="component" value="Chromosome"/>
</dbReference>
<dbReference type="GO" id="GO:0005886">
    <property type="term" value="C:plasma membrane"/>
    <property type="evidence" value="ECO:0007669"/>
    <property type="project" value="UniProtKB-SubCell"/>
</dbReference>
<dbReference type="GO" id="GO:0033178">
    <property type="term" value="C:proton-transporting two-sector ATPase complex, catalytic domain"/>
    <property type="evidence" value="ECO:0007669"/>
    <property type="project" value="InterPro"/>
</dbReference>
<dbReference type="GO" id="GO:0005524">
    <property type="term" value="F:ATP binding"/>
    <property type="evidence" value="ECO:0007669"/>
    <property type="project" value="UniProtKB-UniRule"/>
</dbReference>
<dbReference type="GO" id="GO:0046933">
    <property type="term" value="F:proton-transporting ATP synthase activity, rotational mechanism"/>
    <property type="evidence" value="ECO:0007669"/>
    <property type="project" value="UniProtKB-UniRule"/>
</dbReference>
<dbReference type="GO" id="GO:0046961">
    <property type="term" value="F:proton-transporting ATPase activity, rotational mechanism"/>
    <property type="evidence" value="ECO:0007669"/>
    <property type="project" value="InterPro"/>
</dbReference>
<dbReference type="GO" id="GO:0042777">
    <property type="term" value="P:proton motive force-driven plasma membrane ATP synthesis"/>
    <property type="evidence" value="ECO:0007669"/>
    <property type="project" value="UniProtKB-UniRule"/>
</dbReference>
<dbReference type="CDD" id="cd18111">
    <property type="entry name" value="ATP-synt_V_A-type_alpha_C"/>
    <property type="match status" value="1"/>
</dbReference>
<dbReference type="CDD" id="cd18119">
    <property type="entry name" value="ATP-synt_V_A-type_alpha_N"/>
    <property type="match status" value="1"/>
</dbReference>
<dbReference type="CDD" id="cd01134">
    <property type="entry name" value="V_A-ATPase_A"/>
    <property type="match status" value="1"/>
</dbReference>
<dbReference type="FunFam" id="2.40.30.20:FF:000002">
    <property type="entry name" value="V-type proton ATPase catalytic subunit A"/>
    <property type="match status" value="1"/>
</dbReference>
<dbReference type="FunFam" id="2.40.50.100:FF:000008">
    <property type="entry name" value="V-type proton ATPase catalytic subunit A"/>
    <property type="match status" value="1"/>
</dbReference>
<dbReference type="Gene3D" id="2.40.30.20">
    <property type="match status" value="1"/>
</dbReference>
<dbReference type="Gene3D" id="2.40.50.100">
    <property type="match status" value="1"/>
</dbReference>
<dbReference type="Gene3D" id="1.10.1140.10">
    <property type="entry name" value="Bovine Mitochondrial F1-atpase, Atp Synthase Beta Chain, Chain D, domain 3"/>
    <property type="match status" value="1"/>
</dbReference>
<dbReference type="Gene3D" id="3.40.50.300">
    <property type="entry name" value="P-loop containing nucleotide triphosphate hydrolases"/>
    <property type="match status" value="1"/>
</dbReference>
<dbReference type="HAMAP" id="MF_00309">
    <property type="entry name" value="ATP_synth_A_arch"/>
    <property type="match status" value="1"/>
</dbReference>
<dbReference type="InterPro" id="IPR055190">
    <property type="entry name" value="ATP-synt_VA_C"/>
</dbReference>
<dbReference type="InterPro" id="IPR031686">
    <property type="entry name" value="ATP-synth_a_Xtn"/>
</dbReference>
<dbReference type="InterPro" id="IPR023366">
    <property type="entry name" value="ATP_synth_asu-like_sf"/>
</dbReference>
<dbReference type="InterPro" id="IPR005726">
    <property type="entry name" value="ATP_synth_asu_arc"/>
</dbReference>
<dbReference type="InterPro" id="IPR020003">
    <property type="entry name" value="ATPase_a/bsu_AS"/>
</dbReference>
<dbReference type="InterPro" id="IPR004100">
    <property type="entry name" value="ATPase_F1/V1/A1_a/bsu_N"/>
</dbReference>
<dbReference type="InterPro" id="IPR036121">
    <property type="entry name" value="ATPase_F1/V1/A1_a/bsu_N_sf"/>
</dbReference>
<dbReference type="InterPro" id="IPR000194">
    <property type="entry name" value="ATPase_F1/V1/A1_a/bsu_nucl-bd"/>
</dbReference>
<dbReference type="InterPro" id="IPR024034">
    <property type="entry name" value="ATPase_F1/V1_b/a_C"/>
</dbReference>
<dbReference type="InterPro" id="IPR027417">
    <property type="entry name" value="P-loop_NTPase"/>
</dbReference>
<dbReference type="InterPro" id="IPR022878">
    <property type="entry name" value="V-ATPase_asu"/>
</dbReference>
<dbReference type="NCBIfam" id="TIGR01043">
    <property type="entry name" value="ATP_syn_A_arch"/>
    <property type="match status" value="1"/>
</dbReference>
<dbReference type="NCBIfam" id="NF003220">
    <property type="entry name" value="PRK04192.1"/>
    <property type="match status" value="1"/>
</dbReference>
<dbReference type="PANTHER" id="PTHR43607:SF1">
    <property type="entry name" value="H(+)-TRANSPORTING TWO-SECTOR ATPASE"/>
    <property type="match status" value="1"/>
</dbReference>
<dbReference type="PANTHER" id="PTHR43607">
    <property type="entry name" value="V-TYPE PROTON ATPASE CATALYTIC SUBUNIT A"/>
    <property type="match status" value="1"/>
</dbReference>
<dbReference type="Pfam" id="PF00006">
    <property type="entry name" value="ATP-synt_ab"/>
    <property type="match status" value="1"/>
</dbReference>
<dbReference type="Pfam" id="PF02874">
    <property type="entry name" value="ATP-synt_ab_N"/>
    <property type="match status" value="1"/>
</dbReference>
<dbReference type="Pfam" id="PF16886">
    <property type="entry name" value="ATP-synt_ab_Xtn"/>
    <property type="match status" value="1"/>
</dbReference>
<dbReference type="Pfam" id="PF22919">
    <property type="entry name" value="ATP-synt_VA_C"/>
    <property type="match status" value="1"/>
</dbReference>
<dbReference type="SUPFAM" id="SSF47917">
    <property type="entry name" value="C-terminal domain of alpha and beta subunits of F1 ATP synthase"/>
    <property type="match status" value="1"/>
</dbReference>
<dbReference type="SUPFAM" id="SSF50615">
    <property type="entry name" value="N-terminal domain of alpha and beta subunits of F1 ATP synthase"/>
    <property type="match status" value="1"/>
</dbReference>
<dbReference type="SUPFAM" id="SSF52540">
    <property type="entry name" value="P-loop containing nucleoside triphosphate hydrolases"/>
    <property type="match status" value="1"/>
</dbReference>
<dbReference type="PROSITE" id="PS00152">
    <property type="entry name" value="ATPASE_ALPHA_BETA"/>
    <property type="match status" value="1"/>
</dbReference>
<gene>
    <name evidence="1" type="primary">atpA</name>
    <name type="ordered locus">OE_3985R</name>
</gene>
<proteinExistence type="inferred from homology"/>